<comment type="function">
    <text evidence="1">Activator of cell division through the inhibition of FtsZ GTPase activity, therefore promoting FtsZ assembly into bundles of protofilaments necessary for the formation of the division Z ring. It is recruited early at mid-cell but it is not essential for cell division.</text>
</comment>
<comment type="subunit">
    <text evidence="1">Homodimer. Interacts with FtsZ.</text>
</comment>
<comment type="subcellular location">
    <subcellularLocation>
        <location evidence="1">Cytoplasm</location>
    </subcellularLocation>
    <text evidence="1">Localizes at mid-cell.</text>
</comment>
<comment type="similarity">
    <text evidence="1">Belongs to the ZapA family. Type 1 subfamily.</text>
</comment>
<reference key="1">
    <citation type="journal article" date="2009" name="J. Bacteriol.">
        <title>Genomic sequencing reveals regulatory mutations and recombinational events in the widely used MC4100 lineage of Escherichia coli K-12.</title>
        <authorList>
            <person name="Ferenci T."/>
            <person name="Zhou Z."/>
            <person name="Betteridge T."/>
            <person name="Ren Y."/>
            <person name="Liu Y."/>
            <person name="Feng L."/>
            <person name="Reeves P.R."/>
            <person name="Wang L."/>
        </authorList>
    </citation>
    <scope>NUCLEOTIDE SEQUENCE [LARGE SCALE GENOMIC DNA]</scope>
    <source>
        <strain>K12 / MC4100 / BW2952</strain>
    </source>
</reference>
<evidence type="ECO:0000255" key="1">
    <source>
        <dbReference type="HAMAP-Rule" id="MF_02012"/>
    </source>
</evidence>
<gene>
    <name evidence="1" type="primary">zapA</name>
    <name type="ordered locus">BWG_2635</name>
</gene>
<proteinExistence type="inferred from homology"/>
<organism>
    <name type="scientific">Escherichia coli (strain K12 / MC4100 / BW2952)</name>
    <dbReference type="NCBI Taxonomy" id="595496"/>
    <lineage>
        <taxon>Bacteria</taxon>
        <taxon>Pseudomonadati</taxon>
        <taxon>Pseudomonadota</taxon>
        <taxon>Gammaproteobacteria</taxon>
        <taxon>Enterobacterales</taxon>
        <taxon>Enterobacteriaceae</taxon>
        <taxon>Escherichia</taxon>
    </lineage>
</organism>
<sequence>MSAQPVDIQIFGRSLRVNCPPDQRDALNQAADDLNQRLQDLKERTRVTNTEQLVFIAALNISYELAQEKAKTRDYAASMEQRIRMLQQTIEQALLEQGRITEKTNQNFE</sequence>
<accession>C5A0I2</accession>
<name>ZAPA_ECOBW</name>
<keyword id="KW-0131">Cell cycle</keyword>
<keyword id="KW-0132">Cell division</keyword>
<keyword id="KW-0175">Coiled coil</keyword>
<keyword id="KW-0963">Cytoplasm</keyword>
<keyword id="KW-0717">Septation</keyword>
<feature type="chain" id="PRO_1000216410" description="Cell division protein ZapA">
    <location>
        <begin position="1"/>
        <end position="109"/>
    </location>
</feature>
<feature type="coiled-coil region" evidence="1">
    <location>
        <begin position="21"/>
        <end position="99"/>
    </location>
</feature>
<dbReference type="EMBL" id="CP001396">
    <property type="protein sequence ID" value="ACR65318.1"/>
    <property type="molecule type" value="Genomic_DNA"/>
</dbReference>
<dbReference type="RefSeq" id="WP_001276008.1">
    <property type="nucleotide sequence ID" value="NC_012759.1"/>
</dbReference>
<dbReference type="SMR" id="C5A0I2"/>
<dbReference type="GeneID" id="93779091"/>
<dbReference type="KEGG" id="ebw:BWG_2635"/>
<dbReference type="HOGENOM" id="CLU_116623_3_0_6"/>
<dbReference type="GO" id="GO:0032153">
    <property type="term" value="C:cell division site"/>
    <property type="evidence" value="ECO:0007669"/>
    <property type="project" value="TreeGrafter"/>
</dbReference>
<dbReference type="GO" id="GO:0030428">
    <property type="term" value="C:cell septum"/>
    <property type="evidence" value="ECO:0007669"/>
    <property type="project" value="TreeGrafter"/>
</dbReference>
<dbReference type="GO" id="GO:0005829">
    <property type="term" value="C:cytosol"/>
    <property type="evidence" value="ECO:0007669"/>
    <property type="project" value="TreeGrafter"/>
</dbReference>
<dbReference type="GO" id="GO:0005886">
    <property type="term" value="C:plasma membrane"/>
    <property type="evidence" value="ECO:0007669"/>
    <property type="project" value="UniProtKB-UniRule"/>
</dbReference>
<dbReference type="GO" id="GO:0000917">
    <property type="term" value="P:division septum assembly"/>
    <property type="evidence" value="ECO:0007669"/>
    <property type="project" value="UniProtKB-KW"/>
</dbReference>
<dbReference type="GO" id="GO:0043093">
    <property type="term" value="P:FtsZ-dependent cytokinesis"/>
    <property type="evidence" value="ECO:0007669"/>
    <property type="project" value="TreeGrafter"/>
</dbReference>
<dbReference type="GO" id="GO:0000921">
    <property type="term" value="P:septin ring assembly"/>
    <property type="evidence" value="ECO:0007669"/>
    <property type="project" value="TreeGrafter"/>
</dbReference>
<dbReference type="FunFam" id="1.20.5.50:FF:000001">
    <property type="entry name" value="Cell division protein ZapA"/>
    <property type="match status" value="1"/>
</dbReference>
<dbReference type="FunFam" id="3.30.160.880:FF:000001">
    <property type="entry name" value="Cell division protein ZapA"/>
    <property type="match status" value="1"/>
</dbReference>
<dbReference type="Gene3D" id="1.20.5.50">
    <property type="match status" value="1"/>
</dbReference>
<dbReference type="Gene3D" id="3.30.160.880">
    <property type="entry name" value="Cell division protein ZapA protomer, N-terminal domain"/>
    <property type="match status" value="1"/>
</dbReference>
<dbReference type="HAMAP" id="MF_02012">
    <property type="entry name" value="ZapA_type1"/>
    <property type="match status" value="1"/>
</dbReference>
<dbReference type="InterPro" id="IPR007838">
    <property type="entry name" value="Cell_div_ZapA-like"/>
</dbReference>
<dbReference type="InterPro" id="IPR036192">
    <property type="entry name" value="Cell_div_ZapA-like_sf"/>
</dbReference>
<dbReference type="InterPro" id="IPR023771">
    <property type="entry name" value="Cell_div_ZapA_eubact"/>
</dbReference>
<dbReference type="InterPro" id="IPR042233">
    <property type="entry name" value="Cell_div_ZapA_N"/>
</dbReference>
<dbReference type="NCBIfam" id="NF008209">
    <property type="entry name" value="PRK10972.1"/>
    <property type="match status" value="1"/>
</dbReference>
<dbReference type="PANTHER" id="PTHR34981">
    <property type="entry name" value="CELL DIVISION PROTEIN ZAPA"/>
    <property type="match status" value="1"/>
</dbReference>
<dbReference type="PANTHER" id="PTHR34981:SF1">
    <property type="entry name" value="CELL DIVISION PROTEIN ZAPA"/>
    <property type="match status" value="1"/>
</dbReference>
<dbReference type="Pfam" id="PF05164">
    <property type="entry name" value="ZapA"/>
    <property type="match status" value="1"/>
</dbReference>
<dbReference type="SUPFAM" id="SSF102829">
    <property type="entry name" value="Cell division protein ZapA-like"/>
    <property type="match status" value="1"/>
</dbReference>
<protein>
    <recommendedName>
        <fullName evidence="1">Cell division protein ZapA</fullName>
    </recommendedName>
    <alternativeName>
        <fullName evidence="1">Z ring-associated protein ZapA</fullName>
    </alternativeName>
</protein>